<comment type="catalytic activity">
    <reaction evidence="1">
        <text>urea + 2 H2O + H(+) = hydrogencarbonate + 2 NH4(+)</text>
        <dbReference type="Rhea" id="RHEA:20557"/>
        <dbReference type="ChEBI" id="CHEBI:15377"/>
        <dbReference type="ChEBI" id="CHEBI:15378"/>
        <dbReference type="ChEBI" id="CHEBI:16199"/>
        <dbReference type="ChEBI" id="CHEBI:17544"/>
        <dbReference type="ChEBI" id="CHEBI:28938"/>
        <dbReference type="EC" id="3.5.1.5"/>
    </reaction>
</comment>
<comment type="pathway">
    <text evidence="1">Nitrogen metabolism; urea degradation; CO(2) and NH(3) from urea (urease route): step 1/1.</text>
</comment>
<comment type="subunit">
    <text evidence="1">Heterotrimer of UreA (gamma), UreB (beta) and UreC (alpha) subunits. Three heterotrimers associate to form the active enzyme.</text>
</comment>
<comment type="subcellular location">
    <subcellularLocation>
        <location evidence="1">Cytoplasm</location>
    </subcellularLocation>
</comment>
<comment type="similarity">
    <text evidence="1">Belongs to the urease gamma subunit family.</text>
</comment>
<sequence length="100" mass="11027">MELTPRDKDKLLLFSAAQLAERRRARGLKLNYPEAVALISFEILEGARDGKSVAELMSAGREILTRDDVMEGVAEMVDEVQVEATFPDGTKLVTVHSPIV</sequence>
<evidence type="ECO:0000255" key="1">
    <source>
        <dbReference type="HAMAP-Rule" id="MF_00739"/>
    </source>
</evidence>
<name>URE3_CHRSD</name>
<feature type="chain" id="PRO_1000046322" description="Urease subunit gamma">
    <location>
        <begin position="1"/>
        <end position="100"/>
    </location>
</feature>
<proteinExistence type="inferred from homology"/>
<protein>
    <recommendedName>
        <fullName evidence="1">Urease subunit gamma</fullName>
        <ecNumber evidence="1">3.5.1.5</ecNumber>
    </recommendedName>
    <alternativeName>
        <fullName evidence="1">Urea amidohydrolase subunit gamma</fullName>
    </alternativeName>
</protein>
<keyword id="KW-0963">Cytoplasm</keyword>
<keyword id="KW-0378">Hydrolase</keyword>
<keyword id="KW-1185">Reference proteome</keyword>
<gene>
    <name evidence="1" type="primary">ureA</name>
    <name type="ordered locus">Csal_2307</name>
</gene>
<accession>Q1QV51</accession>
<dbReference type="EC" id="3.5.1.5" evidence="1"/>
<dbReference type="EMBL" id="CP000285">
    <property type="protein sequence ID" value="ABE59657.1"/>
    <property type="molecule type" value="Genomic_DNA"/>
</dbReference>
<dbReference type="RefSeq" id="WP_011507603.1">
    <property type="nucleotide sequence ID" value="NC_007963.1"/>
</dbReference>
<dbReference type="SMR" id="Q1QV51"/>
<dbReference type="STRING" id="290398.Csal_2307"/>
<dbReference type="GeneID" id="95335019"/>
<dbReference type="KEGG" id="csa:Csal_2307"/>
<dbReference type="eggNOG" id="COG0831">
    <property type="taxonomic scope" value="Bacteria"/>
</dbReference>
<dbReference type="HOGENOM" id="CLU_145825_1_0_6"/>
<dbReference type="OrthoDB" id="9797217at2"/>
<dbReference type="UniPathway" id="UPA00258">
    <property type="reaction ID" value="UER00370"/>
</dbReference>
<dbReference type="Proteomes" id="UP000000239">
    <property type="component" value="Chromosome"/>
</dbReference>
<dbReference type="GO" id="GO:0005737">
    <property type="term" value="C:cytoplasm"/>
    <property type="evidence" value="ECO:0007669"/>
    <property type="project" value="UniProtKB-SubCell"/>
</dbReference>
<dbReference type="GO" id="GO:0016151">
    <property type="term" value="F:nickel cation binding"/>
    <property type="evidence" value="ECO:0007669"/>
    <property type="project" value="InterPro"/>
</dbReference>
<dbReference type="GO" id="GO:0009039">
    <property type="term" value="F:urease activity"/>
    <property type="evidence" value="ECO:0007669"/>
    <property type="project" value="UniProtKB-UniRule"/>
</dbReference>
<dbReference type="GO" id="GO:0043419">
    <property type="term" value="P:urea catabolic process"/>
    <property type="evidence" value="ECO:0007669"/>
    <property type="project" value="UniProtKB-UniRule"/>
</dbReference>
<dbReference type="CDD" id="cd00390">
    <property type="entry name" value="Urease_gamma"/>
    <property type="match status" value="1"/>
</dbReference>
<dbReference type="Gene3D" id="3.30.280.10">
    <property type="entry name" value="Urease, gamma-like subunit"/>
    <property type="match status" value="1"/>
</dbReference>
<dbReference type="HAMAP" id="MF_00739">
    <property type="entry name" value="Urease_gamma"/>
    <property type="match status" value="1"/>
</dbReference>
<dbReference type="InterPro" id="IPR012010">
    <property type="entry name" value="Urease_gamma"/>
</dbReference>
<dbReference type="InterPro" id="IPR002026">
    <property type="entry name" value="Urease_gamma/gamma-beta_su"/>
</dbReference>
<dbReference type="InterPro" id="IPR036463">
    <property type="entry name" value="Urease_gamma_sf"/>
</dbReference>
<dbReference type="InterPro" id="IPR050069">
    <property type="entry name" value="Urease_subunit"/>
</dbReference>
<dbReference type="NCBIfam" id="NF009712">
    <property type="entry name" value="PRK13241.1"/>
    <property type="match status" value="1"/>
</dbReference>
<dbReference type="NCBIfam" id="TIGR00193">
    <property type="entry name" value="urease_gam"/>
    <property type="match status" value="1"/>
</dbReference>
<dbReference type="PANTHER" id="PTHR33569">
    <property type="entry name" value="UREASE"/>
    <property type="match status" value="1"/>
</dbReference>
<dbReference type="PANTHER" id="PTHR33569:SF1">
    <property type="entry name" value="UREASE"/>
    <property type="match status" value="1"/>
</dbReference>
<dbReference type="Pfam" id="PF00547">
    <property type="entry name" value="Urease_gamma"/>
    <property type="match status" value="1"/>
</dbReference>
<dbReference type="PIRSF" id="PIRSF001223">
    <property type="entry name" value="Urease_gamma"/>
    <property type="match status" value="1"/>
</dbReference>
<dbReference type="SUPFAM" id="SSF54111">
    <property type="entry name" value="Urease, gamma-subunit"/>
    <property type="match status" value="1"/>
</dbReference>
<organism>
    <name type="scientific">Chromohalobacter salexigens (strain ATCC BAA-138 / DSM 3043 / CIP 106854 / NCIMB 13768 / 1H11)</name>
    <dbReference type="NCBI Taxonomy" id="290398"/>
    <lineage>
        <taxon>Bacteria</taxon>
        <taxon>Pseudomonadati</taxon>
        <taxon>Pseudomonadota</taxon>
        <taxon>Gammaproteobacteria</taxon>
        <taxon>Oceanospirillales</taxon>
        <taxon>Halomonadaceae</taxon>
        <taxon>Chromohalobacter</taxon>
    </lineage>
</organism>
<reference key="1">
    <citation type="journal article" date="2011" name="Stand. Genomic Sci.">
        <title>Complete genome sequence of the halophilic and highly halotolerant Chromohalobacter salexigens type strain (1H11(T)).</title>
        <authorList>
            <person name="Copeland A."/>
            <person name="O'Connor K."/>
            <person name="Lucas S."/>
            <person name="Lapidus A."/>
            <person name="Berry K.W."/>
            <person name="Detter J.C."/>
            <person name="Del Rio T.G."/>
            <person name="Hammon N."/>
            <person name="Dalin E."/>
            <person name="Tice H."/>
            <person name="Pitluck S."/>
            <person name="Bruce D."/>
            <person name="Goodwin L."/>
            <person name="Han C."/>
            <person name="Tapia R."/>
            <person name="Saunders E."/>
            <person name="Schmutz J."/>
            <person name="Brettin T."/>
            <person name="Larimer F."/>
            <person name="Land M."/>
            <person name="Hauser L."/>
            <person name="Vargas C."/>
            <person name="Nieto J.J."/>
            <person name="Kyrpides N.C."/>
            <person name="Ivanova N."/>
            <person name="Goker M."/>
            <person name="Klenk H.P."/>
            <person name="Csonka L.N."/>
            <person name="Woyke T."/>
        </authorList>
    </citation>
    <scope>NUCLEOTIDE SEQUENCE [LARGE SCALE GENOMIC DNA]</scope>
    <source>
        <strain>ATCC BAA-138 / DSM 3043 / CIP 106854 / NCIMB 13768 / 1H11</strain>
    </source>
</reference>